<proteinExistence type="evidence at protein level"/>
<evidence type="ECO:0000250" key="1"/>
<evidence type="ECO:0000255" key="2"/>
<evidence type="ECO:0000255" key="3">
    <source>
        <dbReference type="PROSITE-ProRule" id="PRU00434"/>
    </source>
</evidence>
<evidence type="ECO:0000255" key="4">
    <source>
        <dbReference type="PROSITE-ProRule" id="PRU00441"/>
    </source>
</evidence>
<evidence type="ECO:0000256" key="5">
    <source>
        <dbReference type="SAM" id="MobiDB-lite"/>
    </source>
</evidence>
<evidence type="ECO:0000269" key="6">
    <source>
    </source>
</evidence>
<evidence type="ECO:0000269" key="7">
    <source>
    </source>
</evidence>
<evidence type="ECO:0000269" key="8">
    <source>
    </source>
</evidence>
<evidence type="ECO:0000305" key="9"/>
<evidence type="ECO:0007744" key="10">
    <source>
    </source>
</evidence>
<evidence type="ECO:0007744" key="11">
    <source>
    </source>
</evidence>
<comment type="function">
    <text evidence="7 8">Vacuolar class C ABC transporter which regulates the translocation of phosphatidylcholine to the vacuole lumen, the release of lumenal calcium stores, and acts as a negative regulator of vacuole fusion. Exhibits ATP-dependent bile acid transport.</text>
</comment>
<comment type="subcellular location">
    <subcellularLocation>
        <location evidence="7 8">Vacuole membrane</location>
        <topology evidence="4 7 8">Multi-pass membrane protein</topology>
    </subcellularLocation>
</comment>
<comment type="miscellaneous">
    <text evidence="6">Present with 3000 molecules/cell in log phase SD medium.</text>
</comment>
<comment type="similarity">
    <text evidence="9">Belongs to the ABC transporter superfamily. ABCC family. Conjugate transporter (TC 3.A.1.208) subfamily.</text>
</comment>
<feature type="chain" id="PRO_0000093447" description="ATP-dependent bile acid permease">
    <location>
        <begin position="1"/>
        <end position="1661"/>
    </location>
</feature>
<feature type="topological domain" description="Lumenal" evidence="1">
    <location>
        <begin position="1"/>
        <end position="33"/>
    </location>
</feature>
<feature type="transmembrane region" description="Helical; Name=1" evidence="4">
    <location>
        <begin position="34"/>
        <end position="54"/>
    </location>
</feature>
<feature type="topological domain" description="Cytoplasmic" evidence="1">
    <location>
        <begin position="55"/>
        <end position="74"/>
    </location>
</feature>
<feature type="transmembrane region" description="Helical; Name=2" evidence="4">
    <location>
        <begin position="75"/>
        <end position="95"/>
    </location>
</feature>
<feature type="topological domain" description="Lumenal" evidence="1">
    <location>
        <begin position="96"/>
        <end position="133"/>
    </location>
</feature>
<feature type="transmembrane region" description="Helical; Name=3" evidence="4">
    <location>
        <begin position="134"/>
        <end position="154"/>
    </location>
</feature>
<feature type="topological domain" description="Cytoplasmic" evidence="1">
    <location>
        <begin position="155"/>
        <end position="166"/>
    </location>
</feature>
<feature type="transmembrane region" description="Helical; Name=4" evidence="4">
    <location>
        <begin position="167"/>
        <end position="187"/>
    </location>
</feature>
<feature type="topological domain" description="Lumenal" evidence="1">
    <location>
        <begin position="188"/>
        <end position="205"/>
    </location>
</feature>
<feature type="transmembrane region" description="Helical; Name=5" evidence="4">
    <location>
        <begin position="206"/>
        <end position="226"/>
    </location>
</feature>
<feature type="topological domain" description="Cytoplasmic" evidence="1">
    <location>
        <begin position="227"/>
        <end position="345"/>
    </location>
</feature>
<feature type="transmembrane region" description="Helical; Name=6" evidence="4">
    <location>
        <begin position="346"/>
        <end position="366"/>
    </location>
</feature>
<feature type="topological domain" description="Lumenal" evidence="1">
    <location>
        <begin position="367"/>
        <end position="393"/>
    </location>
</feature>
<feature type="transmembrane region" description="Helical; Name=7" evidence="4">
    <location>
        <begin position="394"/>
        <end position="414"/>
    </location>
</feature>
<feature type="topological domain" description="Cytoplasmic" evidence="1">
    <location>
        <begin position="415"/>
        <end position="495"/>
    </location>
</feature>
<feature type="transmembrane region" description="Helical; Name=8" evidence="4">
    <location>
        <begin position="496"/>
        <end position="516"/>
    </location>
</feature>
<feature type="topological domain" description="Lumenal" evidence="1">
    <location>
        <begin position="517"/>
        <end position="519"/>
    </location>
</feature>
<feature type="transmembrane region" description="Helical; Name=9" evidence="4">
    <location>
        <begin position="520"/>
        <end position="540"/>
    </location>
</feature>
<feature type="topological domain" description="Cytoplasmic" evidence="1">
    <location>
        <begin position="541"/>
        <end position="602"/>
    </location>
</feature>
<feature type="transmembrane region" description="Helical; Name=10" evidence="4">
    <location>
        <begin position="603"/>
        <end position="623"/>
    </location>
</feature>
<feature type="topological domain" description="Lumenal" evidence="1">
    <location>
        <begin position="624"/>
        <end position="644"/>
    </location>
</feature>
<feature type="transmembrane region" description="Helical; Name=11" evidence="4">
    <location>
        <begin position="645"/>
        <end position="665"/>
    </location>
</feature>
<feature type="topological domain" description="Cytoplasmic" evidence="1">
    <location>
        <begin position="666"/>
        <end position="1053"/>
    </location>
</feature>
<feature type="transmembrane region" description="Helical; Name=12" evidence="4">
    <location>
        <begin position="1054"/>
        <end position="1074"/>
    </location>
</feature>
<feature type="topological domain" description="Lumenal" evidence="1">
    <location>
        <begin position="1075"/>
        <end position="1114"/>
    </location>
</feature>
<feature type="transmembrane region" description="Helical; Name=13" evidence="4">
    <location>
        <begin position="1115"/>
        <end position="1135"/>
    </location>
</feature>
<feature type="topological domain" description="Cytoplasmic" evidence="1">
    <location>
        <begin position="1136"/>
        <end position="1178"/>
    </location>
</feature>
<feature type="transmembrane region" description="Helical; Name=14" evidence="4">
    <location>
        <begin position="1179"/>
        <end position="1199"/>
    </location>
</feature>
<feature type="topological domain" description="Lumenal" evidence="1">
    <location>
        <position position="1200"/>
    </location>
</feature>
<feature type="transmembrane region" description="Helical; Name=15" evidence="4">
    <location>
        <begin position="1201"/>
        <end position="1221"/>
    </location>
</feature>
<feature type="topological domain" description="Cytoplasmic" evidence="1">
    <location>
        <begin position="1222"/>
        <end position="1292"/>
    </location>
</feature>
<feature type="transmembrane region" description="Helical; Name=16" evidence="4">
    <location>
        <begin position="1293"/>
        <end position="1313"/>
    </location>
</feature>
<feature type="topological domain" description="Lumenal" evidence="1">
    <location>
        <begin position="1314"/>
        <end position="1315"/>
    </location>
</feature>
<feature type="transmembrane region" description="Helical; Name=17" evidence="4">
    <location>
        <begin position="1316"/>
        <end position="1336"/>
    </location>
</feature>
<feature type="topological domain" description="Cytoplasmic" evidence="1">
    <location>
        <begin position="1337"/>
        <end position="1661"/>
    </location>
</feature>
<feature type="domain" description="ABC transmembrane type-1 1" evidence="4">
    <location>
        <begin position="354"/>
        <end position="662"/>
    </location>
</feature>
<feature type="domain" description="ABC transporter 1" evidence="3">
    <location>
        <begin position="694"/>
        <end position="935"/>
    </location>
</feature>
<feature type="domain" description="ABC transmembrane type-1 2" evidence="4">
    <location>
        <begin position="1026"/>
        <end position="1345"/>
    </location>
</feature>
<feature type="domain" description="ABC transporter 2" evidence="3">
    <location>
        <begin position="1381"/>
        <end position="1636"/>
    </location>
</feature>
<feature type="region of interest" description="Disordered" evidence="5">
    <location>
        <begin position="445"/>
        <end position="468"/>
    </location>
</feature>
<feature type="binding site" evidence="3">
    <location>
        <begin position="729"/>
        <end position="736"/>
    </location>
    <ligand>
        <name>ATP</name>
        <dbReference type="ChEBI" id="CHEBI:30616"/>
        <label>1</label>
    </ligand>
</feature>
<feature type="binding site" evidence="3">
    <location>
        <begin position="1415"/>
        <end position="1422"/>
    </location>
    <ligand>
        <name>ATP</name>
        <dbReference type="ChEBI" id="CHEBI:30616"/>
        <label>2</label>
    </ligand>
</feature>
<feature type="modified residue" description="Phosphoserine" evidence="10">
    <location>
        <position position="936"/>
    </location>
</feature>
<feature type="modified residue" description="Phosphoserine" evidence="11">
    <location>
        <position position="940"/>
    </location>
</feature>
<feature type="modified residue" description="Phosphoserine" evidence="11">
    <location>
        <position position="955"/>
    </location>
</feature>
<feature type="glycosylation site" description="N-linked (GlcNAc...) asparagine" evidence="2">
    <location>
        <position position="6"/>
    </location>
</feature>
<feature type="glycosylation site" description="N-linked (GlcNAc...) asparagine" evidence="2">
    <location>
        <position position="97"/>
    </location>
</feature>
<feature type="sequence conflict" description="In Ref. 3; AAA20992." evidence="9" ref="3">
    <original>TIT</original>
    <variation>QIH</variation>
    <location>
        <begin position="172"/>
        <end position="174"/>
    </location>
</feature>
<feature type="sequence conflict" description="In Ref. 3; AAA20992." evidence="9" ref="3">
    <original>LR</original>
    <variation>FS</variation>
    <location>
        <begin position="188"/>
        <end position="189"/>
    </location>
</feature>
<dbReference type="EMBL" id="Z73153">
    <property type="protein sequence ID" value="CAA97500.1"/>
    <property type="molecule type" value="Genomic_DNA"/>
</dbReference>
<dbReference type="EMBL" id="M88608">
    <property type="protein sequence ID" value="AAA20992.1"/>
    <property type="molecule type" value="Genomic_DNA"/>
</dbReference>
<dbReference type="EMBL" id="BK006945">
    <property type="protein sequence ID" value="DAA09276.1"/>
    <property type="molecule type" value="Genomic_DNA"/>
</dbReference>
<dbReference type="PIR" id="S64800">
    <property type="entry name" value="S64800"/>
</dbReference>
<dbReference type="RefSeq" id="NP_013052.1">
    <property type="nucleotide sequence ID" value="NM_001181868.1"/>
</dbReference>
<dbReference type="SMR" id="P32386"/>
<dbReference type="BioGRID" id="31267">
    <property type="interactions" value="123"/>
</dbReference>
<dbReference type="DIP" id="DIP-6474N"/>
<dbReference type="FunCoup" id="P32386">
    <property type="interactions" value="169"/>
</dbReference>
<dbReference type="IntAct" id="P32386">
    <property type="interactions" value="45"/>
</dbReference>
<dbReference type="MINT" id="P32386"/>
<dbReference type="STRING" id="4932.YLL048C"/>
<dbReference type="TCDB" id="3.A.1.208.12">
    <property type="family name" value="the atp-binding cassette (abc) superfamily"/>
</dbReference>
<dbReference type="GlyCosmos" id="P32386">
    <property type="glycosylation" value="2 sites, No reported glycans"/>
</dbReference>
<dbReference type="GlyGen" id="P32386">
    <property type="glycosylation" value="3 sites"/>
</dbReference>
<dbReference type="iPTMnet" id="P32386"/>
<dbReference type="PaxDb" id="4932-YLL048C"/>
<dbReference type="PeptideAtlas" id="P32386"/>
<dbReference type="EnsemblFungi" id="YLL048C_mRNA">
    <property type="protein sequence ID" value="YLL048C"/>
    <property type="gene ID" value="YLL048C"/>
</dbReference>
<dbReference type="GeneID" id="850678"/>
<dbReference type="KEGG" id="sce:YLL048C"/>
<dbReference type="AGR" id="SGD:S000003971"/>
<dbReference type="SGD" id="S000003971">
    <property type="gene designation" value="YBT1"/>
</dbReference>
<dbReference type="VEuPathDB" id="FungiDB:YLL048C"/>
<dbReference type="eggNOG" id="KOG0054">
    <property type="taxonomic scope" value="Eukaryota"/>
</dbReference>
<dbReference type="GeneTree" id="ENSGT00940000176323"/>
<dbReference type="HOGENOM" id="CLU_000604_27_6_1"/>
<dbReference type="InParanoid" id="P32386"/>
<dbReference type="OMA" id="LRMITNI"/>
<dbReference type="OrthoDB" id="6500128at2759"/>
<dbReference type="BioCyc" id="MetaCyc:G3O-32147-MONOMER"/>
<dbReference type="BioCyc" id="YEAST:G3O-32147-MONOMER"/>
<dbReference type="Reactome" id="R-SCE-159418">
    <property type="pathway name" value="Recycling of bile acids and salts"/>
</dbReference>
<dbReference type="Reactome" id="R-SCE-189483">
    <property type="pathway name" value="Heme degradation"/>
</dbReference>
<dbReference type="Reactome" id="R-SCE-382556">
    <property type="pathway name" value="ABC-family proteins mediated transport"/>
</dbReference>
<dbReference type="Reactome" id="R-SCE-9749641">
    <property type="pathway name" value="Aspirin ADME"/>
</dbReference>
<dbReference type="Reactome" id="R-SCE-9753281">
    <property type="pathway name" value="Paracetamol ADME"/>
</dbReference>
<dbReference type="Reactome" id="R-SCE-9754706">
    <property type="pathway name" value="Atorvastatin ADME"/>
</dbReference>
<dbReference type="BioGRID-ORCS" id="850678">
    <property type="hits" value="0 hits in 10 CRISPR screens"/>
</dbReference>
<dbReference type="PRO" id="PR:P32386"/>
<dbReference type="Proteomes" id="UP000002311">
    <property type="component" value="Chromosome XII"/>
</dbReference>
<dbReference type="RNAct" id="P32386">
    <property type="molecule type" value="protein"/>
</dbReference>
<dbReference type="GO" id="GO:0005783">
    <property type="term" value="C:endoplasmic reticulum"/>
    <property type="evidence" value="ECO:0007005"/>
    <property type="project" value="SGD"/>
</dbReference>
<dbReference type="GO" id="GO:0000324">
    <property type="term" value="C:fungal-type vacuole"/>
    <property type="evidence" value="ECO:0000314"/>
    <property type="project" value="SGD"/>
</dbReference>
<dbReference type="GO" id="GO:0000329">
    <property type="term" value="C:fungal-type vacuole membrane"/>
    <property type="evidence" value="ECO:0000314"/>
    <property type="project" value="SGD"/>
</dbReference>
<dbReference type="GO" id="GO:0045121">
    <property type="term" value="C:membrane raft"/>
    <property type="evidence" value="ECO:0000314"/>
    <property type="project" value="SGD"/>
</dbReference>
<dbReference type="GO" id="GO:0140359">
    <property type="term" value="F:ABC-type transporter activity"/>
    <property type="evidence" value="ECO:0007669"/>
    <property type="project" value="InterPro"/>
</dbReference>
<dbReference type="GO" id="GO:0005524">
    <property type="term" value="F:ATP binding"/>
    <property type="evidence" value="ECO:0007669"/>
    <property type="project" value="UniProtKB-KW"/>
</dbReference>
<dbReference type="GO" id="GO:0016887">
    <property type="term" value="F:ATP hydrolysis activity"/>
    <property type="evidence" value="ECO:0007669"/>
    <property type="project" value="InterPro"/>
</dbReference>
<dbReference type="GO" id="GO:0033285">
    <property type="term" value="F:ATPase-coupled monocarboxylic acid transmembrane transporter activity"/>
    <property type="evidence" value="ECO:0000315"/>
    <property type="project" value="SGD"/>
</dbReference>
<dbReference type="GO" id="GO:0042626">
    <property type="term" value="F:ATPase-coupled transmembrane transporter activity"/>
    <property type="evidence" value="ECO:0000318"/>
    <property type="project" value="GO_Central"/>
</dbReference>
<dbReference type="GO" id="GO:0006816">
    <property type="term" value="P:calcium ion transport"/>
    <property type="evidence" value="ECO:0007669"/>
    <property type="project" value="UniProtKB-KW"/>
</dbReference>
<dbReference type="GO" id="GO:0015718">
    <property type="term" value="P:monocarboxylic acid transport"/>
    <property type="evidence" value="ECO:0000315"/>
    <property type="project" value="SGD"/>
</dbReference>
<dbReference type="GO" id="GO:0055085">
    <property type="term" value="P:transmembrane transport"/>
    <property type="evidence" value="ECO:0000318"/>
    <property type="project" value="GO_Central"/>
</dbReference>
<dbReference type="CDD" id="cd18596">
    <property type="entry name" value="ABC_6TM_VMR1_D1_like"/>
    <property type="match status" value="1"/>
</dbReference>
<dbReference type="CDD" id="cd18604">
    <property type="entry name" value="ABC_6TM_VMR1_D2_like"/>
    <property type="match status" value="1"/>
</dbReference>
<dbReference type="CDD" id="cd03250">
    <property type="entry name" value="ABCC_MRP_domain1"/>
    <property type="match status" value="1"/>
</dbReference>
<dbReference type="CDD" id="cd03369">
    <property type="entry name" value="ABCC_NFT1"/>
    <property type="match status" value="1"/>
</dbReference>
<dbReference type="FunFam" id="1.20.1560.10:FF:000054">
    <property type="entry name" value="ABC bile acid transporter"/>
    <property type="match status" value="1"/>
</dbReference>
<dbReference type="FunFam" id="3.40.50.300:FF:000565">
    <property type="entry name" value="ABC bile acid transporter"/>
    <property type="match status" value="1"/>
</dbReference>
<dbReference type="FunFam" id="3.40.50.300:FF:000825">
    <property type="entry name" value="ABC bile acid transporter"/>
    <property type="match status" value="1"/>
</dbReference>
<dbReference type="Gene3D" id="1.20.1560.10">
    <property type="entry name" value="ABC transporter type 1, transmembrane domain"/>
    <property type="match status" value="2"/>
</dbReference>
<dbReference type="Gene3D" id="3.40.50.300">
    <property type="entry name" value="P-loop containing nucleotide triphosphate hydrolases"/>
    <property type="match status" value="2"/>
</dbReference>
<dbReference type="InterPro" id="IPR003593">
    <property type="entry name" value="AAA+_ATPase"/>
</dbReference>
<dbReference type="InterPro" id="IPR011527">
    <property type="entry name" value="ABC1_TM_dom"/>
</dbReference>
<dbReference type="InterPro" id="IPR036640">
    <property type="entry name" value="ABC1_TM_sf"/>
</dbReference>
<dbReference type="InterPro" id="IPR003439">
    <property type="entry name" value="ABC_transporter-like_ATP-bd"/>
</dbReference>
<dbReference type="InterPro" id="IPR017871">
    <property type="entry name" value="ABC_transporter-like_CS"/>
</dbReference>
<dbReference type="InterPro" id="IPR050173">
    <property type="entry name" value="ABC_transporter_C-like"/>
</dbReference>
<dbReference type="InterPro" id="IPR027417">
    <property type="entry name" value="P-loop_NTPase"/>
</dbReference>
<dbReference type="PANTHER" id="PTHR24223:SF353">
    <property type="entry name" value="ABC TRANSPORTER ATP-BINDING PROTEIN_PERMEASE VMR1-RELATED"/>
    <property type="match status" value="1"/>
</dbReference>
<dbReference type="PANTHER" id="PTHR24223">
    <property type="entry name" value="ATP-BINDING CASSETTE SUB-FAMILY C"/>
    <property type="match status" value="1"/>
</dbReference>
<dbReference type="Pfam" id="PF00664">
    <property type="entry name" value="ABC_membrane"/>
    <property type="match status" value="3"/>
</dbReference>
<dbReference type="Pfam" id="PF00005">
    <property type="entry name" value="ABC_tran"/>
    <property type="match status" value="2"/>
</dbReference>
<dbReference type="SMART" id="SM00382">
    <property type="entry name" value="AAA"/>
    <property type="match status" value="2"/>
</dbReference>
<dbReference type="SUPFAM" id="SSF90123">
    <property type="entry name" value="ABC transporter transmembrane region"/>
    <property type="match status" value="2"/>
</dbReference>
<dbReference type="SUPFAM" id="SSF52540">
    <property type="entry name" value="P-loop containing nucleoside triphosphate hydrolases"/>
    <property type="match status" value="2"/>
</dbReference>
<dbReference type="PROSITE" id="PS50929">
    <property type="entry name" value="ABC_TM1F"/>
    <property type="match status" value="2"/>
</dbReference>
<dbReference type="PROSITE" id="PS00211">
    <property type="entry name" value="ABC_TRANSPORTER_1"/>
    <property type="match status" value="2"/>
</dbReference>
<dbReference type="PROSITE" id="PS50893">
    <property type="entry name" value="ABC_TRANSPORTER_2"/>
    <property type="match status" value="2"/>
</dbReference>
<name>YBT1_YEAST</name>
<gene>
    <name type="primary">YBT1</name>
    <name type="synonym">BAT1</name>
    <name type="ordered locus">YLL048C</name>
</gene>
<reference key="1">
    <citation type="journal article" date="1997" name="Nature">
        <title>The nucleotide sequence of Saccharomyces cerevisiae chromosome XII.</title>
        <authorList>
            <person name="Johnston M."/>
            <person name="Hillier L.W."/>
            <person name="Riles L."/>
            <person name="Albermann K."/>
            <person name="Andre B."/>
            <person name="Ansorge W."/>
            <person name="Benes V."/>
            <person name="Brueckner M."/>
            <person name="Delius H."/>
            <person name="Dubois E."/>
            <person name="Duesterhoeft A."/>
            <person name="Entian K.-D."/>
            <person name="Floeth M."/>
            <person name="Goffeau A."/>
            <person name="Hebling U."/>
            <person name="Heumann K."/>
            <person name="Heuss-Neitzel D."/>
            <person name="Hilbert H."/>
            <person name="Hilger F."/>
            <person name="Kleine K."/>
            <person name="Koetter P."/>
            <person name="Louis E.J."/>
            <person name="Messenguy F."/>
            <person name="Mewes H.-W."/>
            <person name="Miosga T."/>
            <person name="Moestl D."/>
            <person name="Mueller-Auer S."/>
            <person name="Nentwich U."/>
            <person name="Obermaier B."/>
            <person name="Piravandi E."/>
            <person name="Pohl T.M."/>
            <person name="Portetelle D."/>
            <person name="Purnelle B."/>
            <person name="Rechmann S."/>
            <person name="Rieger M."/>
            <person name="Rinke M."/>
            <person name="Rose M."/>
            <person name="Scharfe M."/>
            <person name="Scherens B."/>
            <person name="Scholler P."/>
            <person name="Schwager C."/>
            <person name="Schwarz S."/>
            <person name="Underwood A.P."/>
            <person name="Urrestarazu L.A."/>
            <person name="Vandenbol M."/>
            <person name="Verhasselt P."/>
            <person name="Vierendeels F."/>
            <person name="Voet M."/>
            <person name="Volckaert G."/>
            <person name="Voss H."/>
            <person name="Wambutt R."/>
            <person name="Wedler E."/>
            <person name="Wedler H."/>
            <person name="Zimmermann F.K."/>
            <person name="Zollner A."/>
            <person name="Hani J."/>
            <person name="Hoheisel J.D."/>
        </authorList>
    </citation>
    <scope>NUCLEOTIDE SEQUENCE [LARGE SCALE GENOMIC DNA]</scope>
    <source>
        <strain>ATCC 204508 / S288c</strain>
    </source>
</reference>
<reference key="2">
    <citation type="journal article" date="2014" name="G3 (Bethesda)">
        <title>The reference genome sequence of Saccharomyces cerevisiae: Then and now.</title>
        <authorList>
            <person name="Engel S.R."/>
            <person name="Dietrich F.S."/>
            <person name="Fisk D.G."/>
            <person name="Binkley G."/>
            <person name="Balakrishnan R."/>
            <person name="Costanzo M.C."/>
            <person name="Dwight S.S."/>
            <person name="Hitz B.C."/>
            <person name="Karra K."/>
            <person name="Nash R.S."/>
            <person name="Weng S."/>
            <person name="Wong E.D."/>
            <person name="Lloyd P."/>
            <person name="Skrzypek M.S."/>
            <person name="Miyasato S.R."/>
            <person name="Simison M."/>
            <person name="Cherry J.M."/>
        </authorList>
    </citation>
    <scope>GENOME REANNOTATION</scope>
    <source>
        <strain>ATCC 204508 / S288c</strain>
    </source>
</reference>
<reference key="3">
    <citation type="journal article" date="1994" name="Nucleic Acids Res.">
        <title>RNP1, a new ribonucleoprotein gene of the yeast Saccharomyces cerevisiae.</title>
        <authorList>
            <person name="Cusick M.E."/>
        </authorList>
    </citation>
    <scope>NUCLEOTIDE SEQUENCE [GENOMIC DNA] OF 1-378</scope>
</reference>
<reference key="4">
    <citation type="journal article" date="1997" name="J. Biol. Chem.">
        <title>A yeast ATP-binding cassette-type protein mediating ATP-dependent bile acid transport.</title>
        <authorList>
            <person name="Ortiz D.F."/>
            <person name="St Pierre M.V."/>
            <person name="Abdulmessih A."/>
            <person name="Arias I.M."/>
        </authorList>
    </citation>
    <scope>CHARACTERIZATION</scope>
</reference>
<reference key="5">
    <citation type="journal article" date="2003" name="Nature">
        <title>Global analysis of protein expression in yeast.</title>
        <authorList>
            <person name="Ghaemmaghami S."/>
            <person name="Huh W.-K."/>
            <person name="Bower K."/>
            <person name="Howson R.W."/>
            <person name="Belle A."/>
            <person name="Dephoure N."/>
            <person name="O'Shea E.K."/>
            <person name="Weissman J.S."/>
        </authorList>
    </citation>
    <scope>LEVEL OF PROTEIN EXPRESSION [LARGE SCALE ANALYSIS]</scope>
</reference>
<reference key="6">
    <citation type="journal article" date="2005" name="Mol. Cell. Proteomics">
        <title>Quantitative phosphoproteomics applied to the yeast pheromone signaling pathway.</title>
        <authorList>
            <person name="Gruhler A."/>
            <person name="Olsen J.V."/>
            <person name="Mohammed S."/>
            <person name="Mortensen P."/>
            <person name="Faergeman N.J."/>
            <person name="Mann M."/>
            <person name="Jensen O.N."/>
        </authorList>
    </citation>
    <scope>IDENTIFICATION BY MASS SPECTROMETRY [LARGE SCALE ANALYSIS]</scope>
    <source>
        <strain>YAL6B</strain>
    </source>
</reference>
<reference key="7">
    <citation type="journal article" date="2007" name="J. Proteome Res.">
        <title>Large-scale phosphorylation analysis of alpha-factor-arrested Saccharomyces cerevisiae.</title>
        <authorList>
            <person name="Li X."/>
            <person name="Gerber S.A."/>
            <person name="Rudner A.D."/>
            <person name="Beausoleil S.A."/>
            <person name="Haas W."/>
            <person name="Villen J."/>
            <person name="Elias J.E."/>
            <person name="Gygi S.P."/>
        </authorList>
    </citation>
    <scope>PHOSPHORYLATION [LARGE SCALE ANALYSIS] AT SER-936</scope>
    <scope>IDENTIFICATION BY MASS SPECTROMETRY [LARGE SCALE ANALYSIS]</scope>
    <source>
        <strain>ADR376</strain>
    </source>
</reference>
<reference key="8">
    <citation type="journal article" date="2008" name="Mol. Cell. Proteomics">
        <title>A multidimensional chromatography technology for in-depth phosphoproteome analysis.</title>
        <authorList>
            <person name="Albuquerque C.P."/>
            <person name="Smolka M.B."/>
            <person name="Payne S.H."/>
            <person name="Bafna V."/>
            <person name="Eng J."/>
            <person name="Zhou H."/>
        </authorList>
    </citation>
    <scope>IDENTIFICATION BY MASS SPECTROMETRY [LARGE SCALE ANALYSIS]</scope>
</reference>
<reference key="9">
    <citation type="journal article" date="2009" name="Science">
        <title>Global analysis of Cdk1 substrate phosphorylation sites provides insights into evolution.</title>
        <authorList>
            <person name="Holt L.J."/>
            <person name="Tuch B.B."/>
            <person name="Villen J."/>
            <person name="Johnson A.D."/>
            <person name="Gygi S.P."/>
            <person name="Morgan D.O."/>
        </authorList>
    </citation>
    <scope>PHOSPHORYLATION [LARGE SCALE ANALYSIS] AT SER-940 AND SER-955</scope>
    <scope>IDENTIFICATION BY MASS SPECTROMETRY [LARGE SCALE ANALYSIS]</scope>
</reference>
<reference key="10">
    <citation type="journal article" date="2011" name="Traffic">
        <title>Vacuolar import of phosphatidylcholine requires the ATP-binding cassette transporter Ybt1.</title>
        <authorList>
            <person name="Gulshan K."/>
            <person name="Moye-Rowley W.S."/>
        </authorList>
    </citation>
    <scope>SUBCELLULAR LOCATION</scope>
    <scope>FUNCTION</scope>
</reference>
<reference key="11">
    <citation type="journal article" date="2012" name="Biochem. J.">
        <title>The Yeast vacuolar ABC transporter Ybt1p regulates membrane fusion through Ca2+ transport modulation.</title>
        <authorList>
            <person name="Sasser T.L."/>
            <person name="Padolina M."/>
            <person name="Fratti R.A."/>
        </authorList>
    </citation>
    <scope>SUBCELLULAR LOCATION</scope>
    <scope>FUNCTION</scope>
</reference>
<organism>
    <name type="scientific">Saccharomyces cerevisiae (strain ATCC 204508 / S288c)</name>
    <name type="common">Baker's yeast</name>
    <dbReference type="NCBI Taxonomy" id="559292"/>
    <lineage>
        <taxon>Eukaryota</taxon>
        <taxon>Fungi</taxon>
        <taxon>Dikarya</taxon>
        <taxon>Ascomycota</taxon>
        <taxon>Saccharomycotina</taxon>
        <taxon>Saccharomycetes</taxon>
        <taxon>Saccharomycetales</taxon>
        <taxon>Saccharomycetaceae</taxon>
        <taxon>Saccharomyces</taxon>
    </lineage>
</organism>
<sequence>MHHVLNSTRPDHRFWFYDDVTQYGRTKYLNYYTPLVLLIFTVLFITYNIWKHYYYYDVLHLKQKNPIDELLYSSTDEDEQSPLINNNTITTNYVDNNCTKDALKNRHFSLEKLKSVKVNGEPHGTPEIVRRGFIEKSRIILEFFLVLSQVIIHSFILLHYVNKNPEFTQQGTITGLVEWCALFIIVSLRLANVNQNFKFINKYPGNLWSVSFINYLALFISMILPFRSIFIHHINSPISRKYYISQISINLALFLLLFFARIRNNFAIIYKTDSWITPSPEPVTSIAGFICWAWLDSFVWKAHKVSIKVKDIWGLMMQDYSFFVVKKFRYFVDHKVKRKRIFSLNLFFFFSNYLVLQCFWAFLGSVLSFIPTVLLKRILEYVEDQSSAPSNLAWFYVTVMFVGRILVAICQAQALFFGRRVCIRMKSIIISEIYTKALRRKISTNKTKPSNEDPQEINDQKSINGDEESTSSANLGAIINLMAIDAFKVSEICGYLHSFLEAFVMTVVALALLYRLLGFAAIVGVLIIVAMLPLNYKLAKYIGDLQKKNLAVTDNRIQKLNEAFQAIRIIKYFSWEENFEKDINTIRENELSLLLMRSIVWSISSFLWFVTPTIVTAASFAYYIYVQGEVLTTPVAFTALSLFTLLRDPLDRLSDMLSFVVQSKVSLDRVQDFLNENDTKKYDQLTIDPNGNRFAFENSTISWDKDNQDFKLKDLNIEFKTGKLNVVIGPTGSGKTSLLMALLGEMYLLNGKVVVPALEPRQELIVDANGTTNSIAYCSQAAWLLNDTVKNNILFNSPFNEARYKAVVEACGLKRDFEILKAGDLTEIGEKGITLSGGQKQRVSLARALYSNARHVLLDDCLSAVDSHTASWIYDNCITGPLMEDRTCILVSHNIALTLRNAELVVLLEDGRVKDQGDPIDMLQKGLFGEDELVKSSILSRANSSANLAAKSSTSLSNLPAVKEQQVSVNNNSSHFEAKKLQKSLRTEAERTEDGKLIKEETKEEGVVGLDVYKWYLKIFGGWKIVSFLASLFLIAQLLYIGQSWWVRAWASHNVIAKIIPRAQRAIAFISKKASHLIDWRGSSQISMASAENQPSSGHSTMYYLVLYLIIGFAQALLGAGKTILNFVAGINASRKIFNMILNKVLHSKIRFFDATPTGRIMNRFSKDIEAIDQELTPYIQGAFYSLIECLSTVILITFITPQFLSVAIVVSILYYFVGYFYMAGSRELKRFESISRSPIYQHFSETLVGVTTIRAFGDEGRFMQENLHKIDENNKPFFYLWVANRWLAFRIDMIGSLVIFGAGLFILFNINNLDSGMAGISLTYAISFTEGALWLVRLYSEVEMNMNSVERVKEYMEIEQEPYNEHKEIPPPQWPQDGKIEVNDLSLRYAPNLPRVIKNVSFSVDAQSKIGIVGRTGAGKSTIITALFRFLEPETGHIKIDNIDISGVDLQRLRRSITIIPQDPTLFSGTIKTNLDPYDEFSDRQIFEALKRVNLISEEQLQQGATRETSNEASSTNSENVNKFLDLSSEISEGGSNLSQGQRQLMCLARSLLRSPKIILLDEATASIDYSSDAKIQETIRKEFQGSTILTIAHRLRSVIDYDKILVMDAGEVKEYDHPYSLLLNKQSAFYSMCEHSGELDILIELAKKAFVEKLNSKKD</sequence>
<protein>
    <recommendedName>
        <fullName>ATP-dependent bile acid permease</fullName>
    </recommendedName>
</protein>
<accession>P32386</accession>
<accession>D6VXW0</accession>
<accession>Q07882</accession>
<keyword id="KW-0067">ATP-binding</keyword>
<keyword id="KW-0106">Calcium</keyword>
<keyword id="KW-0109">Calcium transport</keyword>
<keyword id="KW-0325">Glycoprotein</keyword>
<keyword id="KW-0406">Ion transport</keyword>
<keyword id="KW-0472">Membrane</keyword>
<keyword id="KW-0547">Nucleotide-binding</keyword>
<keyword id="KW-0597">Phosphoprotein</keyword>
<keyword id="KW-1185">Reference proteome</keyword>
<keyword id="KW-0677">Repeat</keyword>
<keyword id="KW-0812">Transmembrane</keyword>
<keyword id="KW-1133">Transmembrane helix</keyword>
<keyword id="KW-0813">Transport</keyword>
<keyword id="KW-0926">Vacuole</keyword>